<accession>A0JY64</accession>
<organism>
    <name type="scientific">Arthrobacter sp. (strain FB24)</name>
    <dbReference type="NCBI Taxonomy" id="290399"/>
    <lineage>
        <taxon>Bacteria</taxon>
        <taxon>Bacillati</taxon>
        <taxon>Actinomycetota</taxon>
        <taxon>Actinomycetes</taxon>
        <taxon>Micrococcales</taxon>
        <taxon>Micrococcaceae</taxon>
        <taxon>Arthrobacter</taxon>
    </lineage>
</organism>
<keyword id="KW-0066">ATP synthesis</keyword>
<keyword id="KW-0067">ATP-binding</keyword>
<keyword id="KW-1003">Cell membrane</keyword>
<keyword id="KW-0139">CF(1)</keyword>
<keyword id="KW-0375">Hydrogen ion transport</keyword>
<keyword id="KW-0406">Ion transport</keyword>
<keyword id="KW-0472">Membrane</keyword>
<keyword id="KW-0547">Nucleotide-binding</keyword>
<keyword id="KW-1185">Reference proteome</keyword>
<keyword id="KW-1278">Translocase</keyword>
<keyword id="KW-0813">Transport</keyword>
<evidence type="ECO:0000255" key="1">
    <source>
        <dbReference type="HAMAP-Rule" id="MF_01347"/>
    </source>
</evidence>
<reference key="1">
    <citation type="journal article" date="2013" name="Stand. Genomic Sci.">
        <title>Complete genome sequence of Arthrobacter sp. strain FB24.</title>
        <authorList>
            <person name="Nakatsu C.H."/>
            <person name="Barabote R."/>
            <person name="Thompson S."/>
            <person name="Bruce D."/>
            <person name="Detter C."/>
            <person name="Brettin T."/>
            <person name="Han C."/>
            <person name="Beasley F."/>
            <person name="Chen W."/>
            <person name="Konopka A."/>
            <person name="Xie G."/>
        </authorList>
    </citation>
    <scope>NUCLEOTIDE SEQUENCE [LARGE SCALE GENOMIC DNA]</scope>
    <source>
        <strain>FB24</strain>
    </source>
</reference>
<gene>
    <name evidence="1" type="primary">atpD</name>
    <name type="ordered locus">Arth_2605</name>
</gene>
<feature type="chain" id="PRO_0000339475" description="ATP synthase subunit beta">
    <location>
        <begin position="1"/>
        <end position="484"/>
    </location>
</feature>
<feature type="binding site" evidence="1">
    <location>
        <begin position="168"/>
        <end position="175"/>
    </location>
    <ligand>
        <name>ATP</name>
        <dbReference type="ChEBI" id="CHEBI:30616"/>
    </ligand>
</feature>
<dbReference type="EC" id="7.1.2.2" evidence="1"/>
<dbReference type="EMBL" id="CP000454">
    <property type="protein sequence ID" value="ABK03984.1"/>
    <property type="molecule type" value="Genomic_DNA"/>
</dbReference>
<dbReference type="RefSeq" id="WP_011692446.1">
    <property type="nucleotide sequence ID" value="NC_008541.1"/>
</dbReference>
<dbReference type="SMR" id="A0JY64"/>
<dbReference type="STRING" id="290399.Arth_2605"/>
<dbReference type="KEGG" id="art:Arth_2605"/>
<dbReference type="eggNOG" id="COG0055">
    <property type="taxonomic scope" value="Bacteria"/>
</dbReference>
<dbReference type="HOGENOM" id="CLU_022398_0_2_11"/>
<dbReference type="OrthoDB" id="9801639at2"/>
<dbReference type="Proteomes" id="UP000000754">
    <property type="component" value="Chromosome"/>
</dbReference>
<dbReference type="GO" id="GO:0005886">
    <property type="term" value="C:plasma membrane"/>
    <property type="evidence" value="ECO:0007669"/>
    <property type="project" value="UniProtKB-SubCell"/>
</dbReference>
<dbReference type="GO" id="GO:0045259">
    <property type="term" value="C:proton-transporting ATP synthase complex"/>
    <property type="evidence" value="ECO:0007669"/>
    <property type="project" value="UniProtKB-KW"/>
</dbReference>
<dbReference type="GO" id="GO:0005524">
    <property type="term" value="F:ATP binding"/>
    <property type="evidence" value="ECO:0007669"/>
    <property type="project" value="UniProtKB-UniRule"/>
</dbReference>
<dbReference type="GO" id="GO:0016887">
    <property type="term" value="F:ATP hydrolysis activity"/>
    <property type="evidence" value="ECO:0007669"/>
    <property type="project" value="InterPro"/>
</dbReference>
<dbReference type="GO" id="GO:0046933">
    <property type="term" value="F:proton-transporting ATP synthase activity, rotational mechanism"/>
    <property type="evidence" value="ECO:0007669"/>
    <property type="project" value="UniProtKB-UniRule"/>
</dbReference>
<dbReference type="CDD" id="cd18110">
    <property type="entry name" value="ATP-synt_F1_beta_C"/>
    <property type="match status" value="1"/>
</dbReference>
<dbReference type="CDD" id="cd18115">
    <property type="entry name" value="ATP-synt_F1_beta_N"/>
    <property type="match status" value="1"/>
</dbReference>
<dbReference type="CDD" id="cd01133">
    <property type="entry name" value="F1-ATPase_beta_CD"/>
    <property type="match status" value="1"/>
</dbReference>
<dbReference type="FunFam" id="1.10.1140.10:FF:000005">
    <property type="entry name" value="ATP synthase subunit beta"/>
    <property type="match status" value="1"/>
</dbReference>
<dbReference type="FunFam" id="2.40.10.170:FF:000005">
    <property type="entry name" value="ATP synthase subunit beta"/>
    <property type="match status" value="1"/>
</dbReference>
<dbReference type="FunFam" id="3.40.50.300:FF:000004">
    <property type="entry name" value="ATP synthase subunit beta"/>
    <property type="match status" value="1"/>
</dbReference>
<dbReference type="Gene3D" id="2.40.10.170">
    <property type="match status" value="1"/>
</dbReference>
<dbReference type="Gene3D" id="1.10.1140.10">
    <property type="entry name" value="Bovine Mitochondrial F1-atpase, Atp Synthase Beta Chain, Chain D, domain 3"/>
    <property type="match status" value="1"/>
</dbReference>
<dbReference type="Gene3D" id="3.40.50.300">
    <property type="entry name" value="P-loop containing nucleotide triphosphate hydrolases"/>
    <property type="match status" value="1"/>
</dbReference>
<dbReference type="HAMAP" id="MF_01347">
    <property type="entry name" value="ATP_synth_beta_bact"/>
    <property type="match status" value="1"/>
</dbReference>
<dbReference type="InterPro" id="IPR003593">
    <property type="entry name" value="AAA+_ATPase"/>
</dbReference>
<dbReference type="InterPro" id="IPR055190">
    <property type="entry name" value="ATP-synt_VA_C"/>
</dbReference>
<dbReference type="InterPro" id="IPR005722">
    <property type="entry name" value="ATP_synth_F1_bsu"/>
</dbReference>
<dbReference type="InterPro" id="IPR020003">
    <property type="entry name" value="ATPase_a/bsu_AS"/>
</dbReference>
<dbReference type="InterPro" id="IPR050053">
    <property type="entry name" value="ATPase_alpha/beta_chains"/>
</dbReference>
<dbReference type="InterPro" id="IPR004100">
    <property type="entry name" value="ATPase_F1/V1/A1_a/bsu_N"/>
</dbReference>
<dbReference type="InterPro" id="IPR036121">
    <property type="entry name" value="ATPase_F1/V1/A1_a/bsu_N_sf"/>
</dbReference>
<dbReference type="InterPro" id="IPR000194">
    <property type="entry name" value="ATPase_F1/V1/A1_a/bsu_nucl-bd"/>
</dbReference>
<dbReference type="InterPro" id="IPR024034">
    <property type="entry name" value="ATPase_F1/V1_b/a_C"/>
</dbReference>
<dbReference type="InterPro" id="IPR027417">
    <property type="entry name" value="P-loop_NTPase"/>
</dbReference>
<dbReference type="NCBIfam" id="TIGR01039">
    <property type="entry name" value="atpD"/>
    <property type="match status" value="1"/>
</dbReference>
<dbReference type="PANTHER" id="PTHR15184">
    <property type="entry name" value="ATP SYNTHASE"/>
    <property type="match status" value="1"/>
</dbReference>
<dbReference type="PANTHER" id="PTHR15184:SF71">
    <property type="entry name" value="ATP SYNTHASE SUBUNIT BETA, MITOCHONDRIAL"/>
    <property type="match status" value="1"/>
</dbReference>
<dbReference type="Pfam" id="PF00006">
    <property type="entry name" value="ATP-synt_ab"/>
    <property type="match status" value="1"/>
</dbReference>
<dbReference type="Pfam" id="PF02874">
    <property type="entry name" value="ATP-synt_ab_N"/>
    <property type="match status" value="1"/>
</dbReference>
<dbReference type="Pfam" id="PF22919">
    <property type="entry name" value="ATP-synt_VA_C"/>
    <property type="match status" value="1"/>
</dbReference>
<dbReference type="SMART" id="SM00382">
    <property type="entry name" value="AAA"/>
    <property type="match status" value="1"/>
</dbReference>
<dbReference type="SUPFAM" id="SSF47917">
    <property type="entry name" value="C-terminal domain of alpha and beta subunits of F1 ATP synthase"/>
    <property type="match status" value="1"/>
</dbReference>
<dbReference type="SUPFAM" id="SSF50615">
    <property type="entry name" value="N-terminal domain of alpha and beta subunits of F1 ATP synthase"/>
    <property type="match status" value="1"/>
</dbReference>
<dbReference type="SUPFAM" id="SSF52540">
    <property type="entry name" value="P-loop containing nucleoside triphosphate hydrolases"/>
    <property type="match status" value="1"/>
</dbReference>
<dbReference type="PROSITE" id="PS00152">
    <property type="entry name" value="ATPASE_ALPHA_BETA"/>
    <property type="match status" value="1"/>
</dbReference>
<protein>
    <recommendedName>
        <fullName evidence="1">ATP synthase subunit beta</fullName>
        <ecNumber evidence="1">7.1.2.2</ecNumber>
    </recommendedName>
    <alternativeName>
        <fullName evidence="1">ATP synthase F1 sector subunit beta</fullName>
    </alternativeName>
    <alternativeName>
        <fullName evidence="1">F-ATPase subunit beta</fullName>
    </alternativeName>
</protein>
<proteinExistence type="inferred from homology"/>
<name>ATPB_ARTS2</name>
<comment type="function">
    <text evidence="1">Produces ATP from ADP in the presence of a proton gradient across the membrane. The catalytic sites are hosted primarily by the beta subunits.</text>
</comment>
<comment type="catalytic activity">
    <reaction evidence="1">
        <text>ATP + H2O + 4 H(+)(in) = ADP + phosphate + 5 H(+)(out)</text>
        <dbReference type="Rhea" id="RHEA:57720"/>
        <dbReference type="ChEBI" id="CHEBI:15377"/>
        <dbReference type="ChEBI" id="CHEBI:15378"/>
        <dbReference type="ChEBI" id="CHEBI:30616"/>
        <dbReference type="ChEBI" id="CHEBI:43474"/>
        <dbReference type="ChEBI" id="CHEBI:456216"/>
        <dbReference type="EC" id="7.1.2.2"/>
    </reaction>
</comment>
<comment type="subunit">
    <text evidence="1">F-type ATPases have 2 components, CF(1) - the catalytic core - and CF(0) - the membrane proton channel. CF(1) has five subunits: alpha(3), beta(3), gamma(1), delta(1), epsilon(1). CF(0) has three main subunits: a(1), b(2) and c(9-12). The alpha and beta chains form an alternating ring which encloses part of the gamma chain. CF(1) is attached to CF(0) by a central stalk formed by the gamma and epsilon chains, while a peripheral stalk is formed by the delta and b chains.</text>
</comment>
<comment type="subcellular location">
    <subcellularLocation>
        <location evidence="1">Cell membrane</location>
        <topology evidence="1">Peripheral membrane protein</topology>
    </subcellularLocation>
</comment>
<comment type="similarity">
    <text evidence="1">Belongs to the ATPase alpha/beta chains family.</text>
</comment>
<sequence length="484" mass="52384">MTATATEHVAATSGATGRIARVIGPVVDVEFPADAIPSIYNALTTEITLNGETKTITFEVALHLGDNLIRAISLQATDGLVRGTNVVDTGSPITVPVGDGVKGHIFNVLGKPLDVDESEIQASDHWAIHRKAPAFATLEGSTEMLETGIKVIDLLTPYIKGGKIGLFGGAGVGKTVLIQEMITRVARNFGGTSVFAGVGERTREGNDLWVEMEEAGVLKDTALVFGQMDEPPGTRLRVALSALTMAEYFRDVQNQDVLLFIDNIFRFTQAGSEVSTLLGRMPSAVGYQPNLADEMGLLQERITSTKGHSITSMQAIYVPADDYTDPAPATTFAHLDATTELSREIASRGLYPAVDPLTSTSRILDPQYIGKDHYNTAVRVKQILQKNKELQDIIAILGVDELSEEDKIVVSRARRIQQFLSQNTYTAKQFTGVEGSTVSIKDTVEGFTAICDGELDHVAEQAFFNVGGLDDVERQWAKIQEQTK</sequence>